<reference key="1">
    <citation type="submission" date="2005-09" db="EMBL/GenBank/DDBJ databases">
        <title>Annotation of the Aspergillus terreus NIH2624 genome.</title>
        <authorList>
            <person name="Birren B.W."/>
            <person name="Lander E.S."/>
            <person name="Galagan J.E."/>
            <person name="Nusbaum C."/>
            <person name="Devon K."/>
            <person name="Henn M."/>
            <person name="Ma L.-J."/>
            <person name="Jaffe D.B."/>
            <person name="Butler J."/>
            <person name="Alvarez P."/>
            <person name="Gnerre S."/>
            <person name="Grabherr M."/>
            <person name="Kleber M."/>
            <person name="Mauceli E.W."/>
            <person name="Brockman W."/>
            <person name="Rounsley S."/>
            <person name="Young S.K."/>
            <person name="LaButti K."/>
            <person name="Pushparaj V."/>
            <person name="DeCaprio D."/>
            <person name="Crawford M."/>
            <person name="Koehrsen M."/>
            <person name="Engels R."/>
            <person name="Montgomery P."/>
            <person name="Pearson M."/>
            <person name="Howarth C."/>
            <person name="Larson L."/>
            <person name="Luoma S."/>
            <person name="White J."/>
            <person name="Alvarado L."/>
            <person name="Kodira C.D."/>
            <person name="Zeng Q."/>
            <person name="Oleary S."/>
            <person name="Yandava C."/>
            <person name="Denning D.W."/>
            <person name="Nierman W.C."/>
            <person name="Milne T."/>
            <person name="Madden K."/>
        </authorList>
    </citation>
    <scope>NUCLEOTIDE SEQUENCE [LARGE SCALE GENOMIC DNA]</scope>
    <source>
        <strain>NIH 2624 / FGSC A1156</strain>
    </source>
</reference>
<reference key="2">
    <citation type="journal article" date="1989" name="Arch. Biochem. Biophys.">
        <title>Effect of citreoviridin and isocitreoviridin on beef heart mitochondrial ATPase.</title>
        <authorList>
            <person name="Sayood S.F."/>
            <person name="Suh H."/>
            <person name="Wilcox C.S."/>
            <person name="Schuster S.M."/>
        </authorList>
    </citation>
    <scope>BIOTECHNOLOGY</scope>
</reference>
<reference key="3">
    <citation type="journal article" date="2012" name="Blood">
        <title>Ectopic ATP synthase facilitates transfer of HIV-1 from antigen-presenting cells to CD4(+) target cells.</title>
        <authorList>
            <person name="Yavlovich A."/>
            <person name="Viard M."/>
            <person name="Zhou M."/>
            <person name="Veenstra T.D."/>
            <person name="Wang J.M."/>
            <person name="Gong W."/>
            <person name="Heldman E."/>
            <person name="Blumenthal R."/>
            <person name="Raviv Y."/>
        </authorList>
    </citation>
    <scope>BIOTECHNOLOGY</scope>
</reference>
<reference key="4">
    <citation type="journal article" date="2012" name="Cancer Res.">
        <title>Ectopic ATP synthase blockade suppresses lung adenocarcinoma growth by activating the unfolded protein response.</title>
        <authorList>
            <person name="Chang H.Y."/>
            <person name="Huang H.C."/>
            <person name="Huang T.C."/>
            <person name="Yang P.C."/>
            <person name="Wang Y.C."/>
            <person name="Juan H.F."/>
        </authorList>
    </citation>
    <scope>BIOTECHNOLOGY</scope>
</reference>
<reference key="5">
    <citation type="journal article" date="2016" name="Org. Lett.">
        <title>Biosynthetic pathway of the reduced polyketide product citreoviridin in Aspergillus terreus var. aureus revealed by heterologous expression in Aspergillus nidulans.</title>
        <authorList>
            <person name="Lin T.S."/>
            <person name="Chiang Y.M."/>
            <person name="Wang C.C."/>
        </authorList>
    </citation>
    <scope>FUNCTION</scope>
    <scope>PATHWAY</scope>
</reference>
<proteinExistence type="evidence at protein level"/>
<comment type="function">
    <text evidence="5">Methyltransferase; part of the gene cluster that mediates the biosynthesis of citreoviridin, an inhibitor of the of F1-ATPase beta-subunit (PubMed:26954888). The HR-PKS ctvA accepts acetyl-CoA as the starter unit and catalyzes eight iterations of malonyl-CoA extension and four iterations of SAM-dependent methylation at C4, C12, C14, and C16 (PubMed:26954888). The KR and DH domains selectively act on the first six iterations to generate the hexaene chain (PubMed:26954888). In the last three iterations, the KR and DH domains terminate their functions to yield a beta,delta-diketo ester moiety, which then undergoes intramolecular cyclization to yield an alpha-pyrone intermediate (PubMed:26954888). Subsequently, ctvB methylates the alpha-pyrone hydroxyl group to generate citreomontanin (PubMed:26954888). In order to form the tetrahydrofuran ring with the correct stereochemistry, the terminal alkenes of citreomontanin need to undergo isomerization to yield a (17Z)-hexaene, a step that could be catalyzed by ctvC (PubMed:26954888). The (17Z)-hexaene then undergoes bisepoxidation by ctvC to form a (17R,16R,15S,14R)-bisepoxide moiety (PubMed:26954888). Lastly, ctvD acts as a regioselective hydrolase to form the tetrahydrofuran ring with the substituents in the correct absolute configuration, completing the biosynthesis of citreoviridin (PubMed:26954888).</text>
</comment>
<comment type="pathway">
    <text evidence="8">Mycotoxin biosynthesis.</text>
</comment>
<comment type="biotechnology">
    <text evidence="2 3 4">Citreoviridin inhibits mitochondrial oxidative phosphorylation by binding to the beta-subunit of F1-ATPase (PubMed:2523213). Ectopic mitochondrial ATP synthase is a factor that mediates HIV-1 transfer between antigen-presenting cells (APCs) and CD4+ target cells, and citreoviridin can completely block antigen-presenting cell (APC)-mediated transfer of HIV-1 at the APC-target cells (PubMed:22753871). Inhibition of Ectopic mitochondrial ATP synthase by citreoviridin can also lead to suppression of cancer growth by activating the unfolded protein response (PubMed:22822083).</text>
</comment>
<comment type="similarity">
    <text evidence="1">Belongs to the methyltransferase superfamily.</text>
</comment>
<sequence>MTFYQLSDAEGADNYYNPLLLWWYDFWVHWVSALFAWKCSSKNILLPFFLSNIGSRHCDVGVGTGYYLSAVRKRQPSWPQDKLTLVDFHIRCLRKAANRVGIADRTECVLANILEPIPIQPERQFDSISLMYVLHCLPGASKDKGRVFANLKPLLKDSGTLFGSTLLCRGVRQNWFNWLLQRIYNAVDMFQNRADFPDDFVRALEEEFEEVESVIIGTVLMFKARKPRR</sequence>
<name>CTVB_ASPTN</name>
<evidence type="ECO:0000255" key="1"/>
<evidence type="ECO:0000269" key="2">
    <source>
    </source>
</evidence>
<evidence type="ECO:0000269" key="3">
    <source>
    </source>
</evidence>
<evidence type="ECO:0000269" key="4">
    <source>
    </source>
</evidence>
<evidence type="ECO:0000269" key="5">
    <source>
    </source>
</evidence>
<evidence type="ECO:0000303" key="6">
    <source>
    </source>
</evidence>
<evidence type="ECO:0000305" key="7"/>
<evidence type="ECO:0000305" key="8">
    <source>
    </source>
</evidence>
<feature type="chain" id="PRO_0000437745" description="Methyltransferase ctvB">
    <location>
        <begin position="1"/>
        <end position="229"/>
    </location>
</feature>
<protein>
    <recommendedName>
        <fullName evidence="6">Methyltransferase ctvB</fullName>
        <ecNumber evidence="5">2.1.1.-</ecNumber>
    </recommendedName>
    <alternativeName>
        <fullName evidence="7">Citreoviridin biosynthesis protein B</fullName>
    </alternativeName>
</protein>
<accession>Q0C9L6</accession>
<keyword id="KW-0489">Methyltransferase</keyword>
<keyword id="KW-1185">Reference proteome</keyword>
<keyword id="KW-0808">Transferase</keyword>
<organism>
    <name type="scientific">Aspergillus terreus (strain NIH 2624 / FGSC A1156)</name>
    <dbReference type="NCBI Taxonomy" id="341663"/>
    <lineage>
        <taxon>Eukaryota</taxon>
        <taxon>Fungi</taxon>
        <taxon>Dikarya</taxon>
        <taxon>Ascomycota</taxon>
        <taxon>Pezizomycotina</taxon>
        <taxon>Eurotiomycetes</taxon>
        <taxon>Eurotiomycetidae</taxon>
        <taxon>Eurotiales</taxon>
        <taxon>Aspergillaceae</taxon>
        <taxon>Aspergillus</taxon>
        <taxon>Aspergillus subgen. Circumdati</taxon>
    </lineage>
</organism>
<dbReference type="EC" id="2.1.1.-" evidence="5"/>
<dbReference type="EMBL" id="CH476608">
    <property type="protein sequence ID" value="EAU29809.1"/>
    <property type="molecule type" value="Genomic_DNA"/>
</dbReference>
<dbReference type="RefSeq" id="XP_001218240.1">
    <property type="nucleotide sequence ID" value="XM_001218239.1"/>
</dbReference>
<dbReference type="SMR" id="Q0C9L6"/>
<dbReference type="STRING" id="341663.Q0C9L6"/>
<dbReference type="EnsemblFungi" id="EAU29809">
    <property type="protein sequence ID" value="EAU29809"/>
    <property type="gene ID" value="ATEG_09618"/>
</dbReference>
<dbReference type="GeneID" id="4354536"/>
<dbReference type="VEuPathDB" id="FungiDB:ATEG_09618"/>
<dbReference type="eggNOG" id="ENOG502SNYW">
    <property type="taxonomic scope" value="Eukaryota"/>
</dbReference>
<dbReference type="HOGENOM" id="CLU_046029_0_0_1"/>
<dbReference type="OMA" id="VWRCPLP"/>
<dbReference type="OrthoDB" id="10061782at2759"/>
<dbReference type="Proteomes" id="UP000007963">
    <property type="component" value="Unassembled WGS sequence"/>
</dbReference>
<dbReference type="GO" id="GO:0008168">
    <property type="term" value="F:methyltransferase activity"/>
    <property type="evidence" value="ECO:0007669"/>
    <property type="project" value="UniProtKB-KW"/>
</dbReference>
<dbReference type="GO" id="GO:0032259">
    <property type="term" value="P:methylation"/>
    <property type="evidence" value="ECO:0007669"/>
    <property type="project" value="UniProtKB-KW"/>
</dbReference>
<dbReference type="CDD" id="cd02440">
    <property type="entry name" value="AdoMet_MTases"/>
    <property type="match status" value="1"/>
</dbReference>
<dbReference type="Gene3D" id="3.40.50.150">
    <property type="entry name" value="Vaccinia Virus protein VP39"/>
    <property type="match status" value="1"/>
</dbReference>
<dbReference type="InterPro" id="IPR013217">
    <property type="entry name" value="Methyltransf_12"/>
</dbReference>
<dbReference type="InterPro" id="IPR016584">
    <property type="entry name" value="MeTrfase_VrtF"/>
</dbReference>
<dbReference type="InterPro" id="IPR029063">
    <property type="entry name" value="SAM-dependent_MTases_sf"/>
</dbReference>
<dbReference type="Pfam" id="PF08242">
    <property type="entry name" value="Methyltransf_12"/>
    <property type="match status" value="1"/>
</dbReference>
<dbReference type="PIRSF" id="PIRSF011491">
    <property type="entry name" value="Mtase_YbcY_prd"/>
    <property type="match status" value="1"/>
</dbReference>
<dbReference type="SUPFAM" id="SSF53335">
    <property type="entry name" value="S-adenosyl-L-methionine-dependent methyltransferases"/>
    <property type="match status" value="1"/>
</dbReference>
<gene>
    <name evidence="6" type="primary">ctvB</name>
    <name type="ORF">ATEG_09618</name>
</gene>